<organism>
    <name type="scientific">Streptococcus pneumoniae (strain Taiwan19F-14)</name>
    <dbReference type="NCBI Taxonomy" id="487213"/>
    <lineage>
        <taxon>Bacteria</taxon>
        <taxon>Bacillati</taxon>
        <taxon>Bacillota</taxon>
        <taxon>Bacilli</taxon>
        <taxon>Lactobacillales</taxon>
        <taxon>Streptococcaceae</taxon>
        <taxon>Streptococcus</taxon>
    </lineage>
</organism>
<proteinExistence type="inferred from homology"/>
<evidence type="ECO:0000255" key="1">
    <source>
        <dbReference type="HAMAP-Rule" id="MF_00046"/>
    </source>
</evidence>
<sequence length="444" mass="49874">MSKTYHFIGIKGSGMSALALMLHQMGHKVQGSDVEKYYFTQRGLEQAGITILPFDEKNLDGDMEIIAGNAFRPDNNVEIAYADQNGISYKRYHEFLGSFMRDFVSMGVAGAHGKTSTTGMLSHVLSHITDTSFLIGDGTGRGSANAKYFVFESDEYERHFMPYHPEYSIITNIDFDHPDYFTSLEDVFNAFNDYAKQITKGLFVYGEDAELRKITSDAPIYYYGFEAEGNDFVASDLLRSTTGSTFTVHFRGQNLGQFHIPTFGRHNIMNATAVIGLLYTAGFDLNLVREHLKTFAGVKRRFTEKIVNDTVIIDDFAHHPTEIIATLDAARQKYPSKEIVAVFQPHTFTRTIALLDDFAHALNQADAVYLAQIYGSAREVDHGDVKVEDLANKINKKHQVITVENVSPLLDHDNAVYVFMGAGDIQTYEYSFERLLSNLTSNVQ</sequence>
<gene>
    <name evidence="1" type="primary">murC</name>
    <name type="ordered locus">SPT_1459</name>
</gene>
<dbReference type="EC" id="6.3.2.8" evidence="1"/>
<dbReference type="EMBL" id="CP000921">
    <property type="protein sequence ID" value="ACO22319.1"/>
    <property type="molecule type" value="Genomic_DNA"/>
</dbReference>
<dbReference type="RefSeq" id="WP_000048090.1">
    <property type="nucleotide sequence ID" value="NC_012469.1"/>
</dbReference>
<dbReference type="SMR" id="C1CSE1"/>
<dbReference type="KEGG" id="snt:SPT_1459"/>
<dbReference type="HOGENOM" id="CLU_028104_1_0_9"/>
<dbReference type="UniPathway" id="UPA00219"/>
<dbReference type="GO" id="GO:0005737">
    <property type="term" value="C:cytoplasm"/>
    <property type="evidence" value="ECO:0007669"/>
    <property type="project" value="UniProtKB-SubCell"/>
</dbReference>
<dbReference type="GO" id="GO:0005524">
    <property type="term" value="F:ATP binding"/>
    <property type="evidence" value="ECO:0007669"/>
    <property type="project" value="UniProtKB-UniRule"/>
</dbReference>
<dbReference type="GO" id="GO:0008763">
    <property type="term" value="F:UDP-N-acetylmuramate-L-alanine ligase activity"/>
    <property type="evidence" value="ECO:0007669"/>
    <property type="project" value="UniProtKB-UniRule"/>
</dbReference>
<dbReference type="GO" id="GO:0051301">
    <property type="term" value="P:cell division"/>
    <property type="evidence" value="ECO:0007669"/>
    <property type="project" value="UniProtKB-KW"/>
</dbReference>
<dbReference type="GO" id="GO:0071555">
    <property type="term" value="P:cell wall organization"/>
    <property type="evidence" value="ECO:0007669"/>
    <property type="project" value="UniProtKB-KW"/>
</dbReference>
<dbReference type="GO" id="GO:0009252">
    <property type="term" value="P:peptidoglycan biosynthetic process"/>
    <property type="evidence" value="ECO:0007669"/>
    <property type="project" value="UniProtKB-UniRule"/>
</dbReference>
<dbReference type="GO" id="GO:0008360">
    <property type="term" value="P:regulation of cell shape"/>
    <property type="evidence" value="ECO:0007669"/>
    <property type="project" value="UniProtKB-KW"/>
</dbReference>
<dbReference type="Gene3D" id="3.90.190.20">
    <property type="entry name" value="Mur ligase, C-terminal domain"/>
    <property type="match status" value="1"/>
</dbReference>
<dbReference type="Gene3D" id="3.40.1190.10">
    <property type="entry name" value="Mur-like, catalytic domain"/>
    <property type="match status" value="1"/>
</dbReference>
<dbReference type="Gene3D" id="3.40.50.720">
    <property type="entry name" value="NAD(P)-binding Rossmann-like Domain"/>
    <property type="match status" value="1"/>
</dbReference>
<dbReference type="HAMAP" id="MF_00046">
    <property type="entry name" value="MurC"/>
    <property type="match status" value="1"/>
</dbReference>
<dbReference type="InterPro" id="IPR036565">
    <property type="entry name" value="Mur-like_cat_sf"/>
</dbReference>
<dbReference type="InterPro" id="IPR004101">
    <property type="entry name" value="Mur_ligase_C"/>
</dbReference>
<dbReference type="InterPro" id="IPR036615">
    <property type="entry name" value="Mur_ligase_C_dom_sf"/>
</dbReference>
<dbReference type="InterPro" id="IPR013221">
    <property type="entry name" value="Mur_ligase_cen"/>
</dbReference>
<dbReference type="InterPro" id="IPR000713">
    <property type="entry name" value="Mur_ligase_N"/>
</dbReference>
<dbReference type="InterPro" id="IPR050061">
    <property type="entry name" value="MurCDEF_pg_biosynth"/>
</dbReference>
<dbReference type="InterPro" id="IPR005758">
    <property type="entry name" value="UDP-N-AcMur_Ala_ligase_MurC"/>
</dbReference>
<dbReference type="NCBIfam" id="TIGR01082">
    <property type="entry name" value="murC"/>
    <property type="match status" value="1"/>
</dbReference>
<dbReference type="PANTHER" id="PTHR43445:SF3">
    <property type="entry name" value="UDP-N-ACETYLMURAMATE--L-ALANINE LIGASE"/>
    <property type="match status" value="1"/>
</dbReference>
<dbReference type="PANTHER" id="PTHR43445">
    <property type="entry name" value="UDP-N-ACETYLMURAMATE--L-ALANINE LIGASE-RELATED"/>
    <property type="match status" value="1"/>
</dbReference>
<dbReference type="Pfam" id="PF01225">
    <property type="entry name" value="Mur_ligase"/>
    <property type="match status" value="1"/>
</dbReference>
<dbReference type="Pfam" id="PF02875">
    <property type="entry name" value="Mur_ligase_C"/>
    <property type="match status" value="1"/>
</dbReference>
<dbReference type="Pfam" id="PF08245">
    <property type="entry name" value="Mur_ligase_M"/>
    <property type="match status" value="1"/>
</dbReference>
<dbReference type="SUPFAM" id="SSF51984">
    <property type="entry name" value="MurCD N-terminal domain"/>
    <property type="match status" value="1"/>
</dbReference>
<dbReference type="SUPFAM" id="SSF53623">
    <property type="entry name" value="MurD-like peptide ligases, catalytic domain"/>
    <property type="match status" value="1"/>
</dbReference>
<dbReference type="SUPFAM" id="SSF53244">
    <property type="entry name" value="MurD-like peptide ligases, peptide-binding domain"/>
    <property type="match status" value="1"/>
</dbReference>
<accession>C1CSE1</accession>
<name>MURC_STRZT</name>
<protein>
    <recommendedName>
        <fullName evidence="1">UDP-N-acetylmuramate--L-alanine ligase</fullName>
        <ecNumber evidence="1">6.3.2.8</ecNumber>
    </recommendedName>
    <alternativeName>
        <fullName evidence="1">UDP-N-acetylmuramoyl-L-alanine synthetase</fullName>
    </alternativeName>
</protein>
<comment type="function">
    <text evidence="1">Cell wall formation.</text>
</comment>
<comment type="catalytic activity">
    <reaction evidence="1">
        <text>UDP-N-acetyl-alpha-D-muramate + L-alanine + ATP = UDP-N-acetyl-alpha-D-muramoyl-L-alanine + ADP + phosphate + H(+)</text>
        <dbReference type="Rhea" id="RHEA:23372"/>
        <dbReference type="ChEBI" id="CHEBI:15378"/>
        <dbReference type="ChEBI" id="CHEBI:30616"/>
        <dbReference type="ChEBI" id="CHEBI:43474"/>
        <dbReference type="ChEBI" id="CHEBI:57972"/>
        <dbReference type="ChEBI" id="CHEBI:70757"/>
        <dbReference type="ChEBI" id="CHEBI:83898"/>
        <dbReference type="ChEBI" id="CHEBI:456216"/>
        <dbReference type="EC" id="6.3.2.8"/>
    </reaction>
</comment>
<comment type="pathway">
    <text evidence="1">Cell wall biogenesis; peptidoglycan biosynthesis.</text>
</comment>
<comment type="subcellular location">
    <subcellularLocation>
        <location evidence="1">Cytoplasm</location>
    </subcellularLocation>
</comment>
<comment type="similarity">
    <text evidence="1">Belongs to the MurCDEF family.</text>
</comment>
<feature type="chain" id="PRO_1000192117" description="UDP-N-acetylmuramate--L-alanine ligase">
    <location>
        <begin position="1"/>
        <end position="444"/>
    </location>
</feature>
<feature type="binding site" evidence="1">
    <location>
        <begin position="110"/>
        <end position="116"/>
    </location>
    <ligand>
        <name>ATP</name>
        <dbReference type="ChEBI" id="CHEBI:30616"/>
    </ligand>
</feature>
<reference key="1">
    <citation type="journal article" date="2010" name="Genome Biol.">
        <title>Structure and dynamics of the pan-genome of Streptococcus pneumoniae and closely related species.</title>
        <authorList>
            <person name="Donati C."/>
            <person name="Hiller N.L."/>
            <person name="Tettelin H."/>
            <person name="Muzzi A."/>
            <person name="Croucher N.J."/>
            <person name="Angiuoli S.V."/>
            <person name="Oggioni M."/>
            <person name="Dunning Hotopp J.C."/>
            <person name="Hu F.Z."/>
            <person name="Riley D.R."/>
            <person name="Covacci A."/>
            <person name="Mitchell T.J."/>
            <person name="Bentley S.D."/>
            <person name="Kilian M."/>
            <person name="Ehrlich G.D."/>
            <person name="Rappuoli R."/>
            <person name="Moxon E.R."/>
            <person name="Masignani V."/>
        </authorList>
    </citation>
    <scope>NUCLEOTIDE SEQUENCE [LARGE SCALE GENOMIC DNA]</scope>
    <source>
        <strain>Taiwan19F-14</strain>
    </source>
</reference>
<keyword id="KW-0067">ATP-binding</keyword>
<keyword id="KW-0131">Cell cycle</keyword>
<keyword id="KW-0132">Cell division</keyword>
<keyword id="KW-0133">Cell shape</keyword>
<keyword id="KW-0961">Cell wall biogenesis/degradation</keyword>
<keyword id="KW-0963">Cytoplasm</keyword>
<keyword id="KW-0436">Ligase</keyword>
<keyword id="KW-0547">Nucleotide-binding</keyword>
<keyword id="KW-0573">Peptidoglycan synthesis</keyword>